<dbReference type="EMBL" id="AY356352">
    <property type="protein sequence ID" value="AAR10439.1"/>
    <property type="molecule type" value="mRNA"/>
</dbReference>
<dbReference type="EMBL" id="AK315554">
    <property type="protein sequence ID" value="BAG37930.1"/>
    <property type="molecule type" value="mRNA"/>
</dbReference>
<dbReference type="EMBL" id="BC004988">
    <property type="protein sequence ID" value="AAH04988.1"/>
    <property type="molecule type" value="mRNA"/>
</dbReference>
<dbReference type="EMBL" id="AJ311359">
    <property type="protein sequence ID" value="CAC85342.1"/>
    <property type="molecule type" value="mRNA"/>
</dbReference>
<dbReference type="EMBL" id="AL365408">
    <property type="protein sequence ID" value="CAB96952.1"/>
    <property type="molecule type" value="mRNA"/>
</dbReference>
<dbReference type="EMBL" id="AL359589">
    <property type="protein sequence ID" value="CAB94875.1"/>
    <property type="molecule type" value="mRNA"/>
</dbReference>
<dbReference type="EMBL" id="CR749732">
    <property type="protein sequence ID" value="CAH18491.1"/>
    <property type="molecule type" value="mRNA"/>
</dbReference>
<dbReference type="CCDS" id="CCDS12135.1"/>
<dbReference type="PIR" id="T50619">
    <property type="entry name" value="T50619"/>
</dbReference>
<dbReference type="RefSeq" id="NP_061178.1">
    <property type="nucleotide sequence ID" value="NM_018708.3"/>
</dbReference>
<dbReference type="SMR" id="Q9BSK4"/>
<dbReference type="BioGRID" id="120699">
    <property type="interactions" value="107"/>
</dbReference>
<dbReference type="ComplexPortal" id="CPX-2217">
    <property type="entry name" value="FEM1A-Elongin C-Elongin B E3 ubiquitin ligase complex"/>
</dbReference>
<dbReference type="CORUM" id="Q9BSK4"/>
<dbReference type="FunCoup" id="Q9BSK4">
    <property type="interactions" value="517"/>
</dbReference>
<dbReference type="IntAct" id="Q9BSK4">
    <property type="interactions" value="99"/>
</dbReference>
<dbReference type="STRING" id="9606.ENSP00000269856"/>
<dbReference type="GlyGen" id="Q9BSK4">
    <property type="glycosylation" value="1 site, 1 N-linked glycan (1 site)"/>
</dbReference>
<dbReference type="iPTMnet" id="Q9BSK4"/>
<dbReference type="PhosphoSitePlus" id="Q9BSK4"/>
<dbReference type="BioMuta" id="FEM1A"/>
<dbReference type="DMDM" id="74752305"/>
<dbReference type="jPOST" id="Q9BSK4"/>
<dbReference type="MassIVE" id="Q9BSK4"/>
<dbReference type="PaxDb" id="9606-ENSP00000269856"/>
<dbReference type="PeptideAtlas" id="Q9BSK4"/>
<dbReference type="ProteomicsDB" id="78912"/>
<dbReference type="Pumba" id="Q9BSK4"/>
<dbReference type="Antibodypedia" id="11533">
    <property type="antibodies" value="144 antibodies from 29 providers"/>
</dbReference>
<dbReference type="DNASU" id="55527"/>
<dbReference type="Ensembl" id="ENST00000269856.5">
    <property type="protein sequence ID" value="ENSP00000269856.3"/>
    <property type="gene ID" value="ENSG00000141965.5"/>
</dbReference>
<dbReference type="GeneID" id="55527"/>
<dbReference type="KEGG" id="hsa:55527"/>
<dbReference type="MANE-Select" id="ENST00000269856.5">
    <property type="protein sequence ID" value="ENSP00000269856.3"/>
    <property type="RefSeq nucleotide sequence ID" value="NM_018708.3"/>
    <property type="RefSeq protein sequence ID" value="NP_061178.1"/>
</dbReference>
<dbReference type="UCSC" id="uc002mbf.4">
    <property type="organism name" value="human"/>
</dbReference>
<dbReference type="AGR" id="HGNC:16934"/>
<dbReference type="CTD" id="55527"/>
<dbReference type="DisGeNET" id="55527"/>
<dbReference type="GeneCards" id="FEM1A"/>
<dbReference type="HGNC" id="HGNC:16934">
    <property type="gene designation" value="FEM1A"/>
</dbReference>
<dbReference type="HPA" id="ENSG00000141965">
    <property type="expression patterns" value="Group enriched (skeletal muscle, tongue)"/>
</dbReference>
<dbReference type="MIM" id="613538">
    <property type="type" value="gene"/>
</dbReference>
<dbReference type="neXtProt" id="NX_Q9BSK4"/>
<dbReference type="OpenTargets" id="ENSG00000141965"/>
<dbReference type="PharmGKB" id="PA134940973"/>
<dbReference type="VEuPathDB" id="HostDB:ENSG00000141965"/>
<dbReference type="eggNOG" id="KOG0508">
    <property type="taxonomic scope" value="Eukaryota"/>
</dbReference>
<dbReference type="GeneTree" id="ENSGT00940000161210"/>
<dbReference type="HOGENOM" id="CLU_020042_2_0_1"/>
<dbReference type="InParanoid" id="Q9BSK4"/>
<dbReference type="OMA" id="EQSSGHP"/>
<dbReference type="OrthoDB" id="4429489at2759"/>
<dbReference type="PAN-GO" id="Q9BSK4">
    <property type="GO annotations" value="3 GO annotations based on evolutionary models"/>
</dbReference>
<dbReference type="PhylomeDB" id="Q9BSK4"/>
<dbReference type="TreeFam" id="TF351376"/>
<dbReference type="PathwayCommons" id="Q9BSK4"/>
<dbReference type="Reactome" id="R-HSA-8951664">
    <property type="pathway name" value="Neddylation"/>
</dbReference>
<dbReference type="SignaLink" id="Q9BSK4"/>
<dbReference type="UniPathway" id="UPA00143"/>
<dbReference type="BioGRID-ORCS" id="55527">
    <property type="hits" value="44 hits in 1162 CRISPR screens"/>
</dbReference>
<dbReference type="ChiTaRS" id="FEM1A">
    <property type="organism name" value="human"/>
</dbReference>
<dbReference type="GenomeRNAi" id="55527"/>
<dbReference type="Pharos" id="Q9BSK4">
    <property type="development level" value="Tbio"/>
</dbReference>
<dbReference type="PRO" id="PR:Q9BSK4"/>
<dbReference type="Proteomes" id="UP000005640">
    <property type="component" value="Chromosome 19"/>
</dbReference>
<dbReference type="RNAct" id="Q9BSK4">
    <property type="molecule type" value="protein"/>
</dbReference>
<dbReference type="Bgee" id="ENSG00000141965">
    <property type="expression patterns" value="Expressed in skeletal muscle tissue of rectus abdominis and 189 other cell types or tissues"/>
</dbReference>
<dbReference type="GO" id="GO:0031462">
    <property type="term" value="C:Cul2-RING ubiquitin ligase complex"/>
    <property type="evidence" value="ECO:0000314"/>
    <property type="project" value="UniProtKB"/>
</dbReference>
<dbReference type="GO" id="GO:0005737">
    <property type="term" value="C:cytoplasm"/>
    <property type="evidence" value="ECO:0000314"/>
    <property type="project" value="UniProt"/>
</dbReference>
<dbReference type="GO" id="GO:0005829">
    <property type="term" value="C:cytosol"/>
    <property type="evidence" value="ECO:0000304"/>
    <property type="project" value="Reactome"/>
</dbReference>
<dbReference type="GO" id="GO:0005739">
    <property type="term" value="C:mitochondrion"/>
    <property type="evidence" value="ECO:0000314"/>
    <property type="project" value="UniProtKB"/>
</dbReference>
<dbReference type="GO" id="GO:0000151">
    <property type="term" value="C:ubiquitin ligase complex"/>
    <property type="evidence" value="ECO:0000318"/>
    <property type="project" value="GO_Central"/>
</dbReference>
<dbReference type="GO" id="GO:0031867">
    <property type="term" value="F:EP4 subtype prostaglandin E2 receptor binding"/>
    <property type="evidence" value="ECO:0000353"/>
    <property type="project" value="UniProtKB"/>
</dbReference>
<dbReference type="GO" id="GO:0060090">
    <property type="term" value="F:molecular adaptor activity"/>
    <property type="evidence" value="ECO:0000314"/>
    <property type="project" value="UniProt"/>
</dbReference>
<dbReference type="GO" id="GO:1990756">
    <property type="term" value="F:ubiquitin-like ligase-substrate adaptor activity"/>
    <property type="evidence" value="ECO:0000314"/>
    <property type="project" value="UniProtKB"/>
</dbReference>
<dbReference type="GO" id="GO:0050728">
    <property type="term" value="P:negative regulation of inflammatory response"/>
    <property type="evidence" value="ECO:0000314"/>
    <property type="project" value="UniProtKB"/>
</dbReference>
<dbReference type="GO" id="GO:0050729">
    <property type="term" value="P:positive regulation of inflammatory response"/>
    <property type="evidence" value="ECO:0000250"/>
    <property type="project" value="UniProtKB"/>
</dbReference>
<dbReference type="GO" id="GO:0043161">
    <property type="term" value="P:proteasome-mediated ubiquitin-dependent protein catabolic process"/>
    <property type="evidence" value="ECO:0000318"/>
    <property type="project" value="GO_Central"/>
</dbReference>
<dbReference type="GO" id="GO:0016567">
    <property type="term" value="P:protein ubiquitination"/>
    <property type="evidence" value="ECO:0007669"/>
    <property type="project" value="UniProtKB-UniPathway"/>
</dbReference>
<dbReference type="GO" id="GO:0051438">
    <property type="term" value="P:regulation of ubiquitin-protein transferase activity"/>
    <property type="evidence" value="ECO:0000250"/>
    <property type="project" value="UniProtKB"/>
</dbReference>
<dbReference type="GO" id="GO:0140627">
    <property type="term" value="P:ubiquitin-dependent protein catabolic process via the C-end degron rule pathway"/>
    <property type="evidence" value="ECO:0000314"/>
    <property type="project" value="UniProtKB"/>
</dbReference>
<dbReference type="FunFam" id="1.25.40.20:FF:000076">
    <property type="entry name" value="Fem-1 homolog c (C.elegans)"/>
    <property type="match status" value="1"/>
</dbReference>
<dbReference type="FunFam" id="1.25.40.10:FF:000261">
    <property type="entry name" value="protein fem-1 homolog A"/>
    <property type="match status" value="1"/>
</dbReference>
<dbReference type="FunFam" id="1.25.40.20:FF:000133">
    <property type="entry name" value="protein fem-1 homolog A"/>
    <property type="match status" value="1"/>
</dbReference>
<dbReference type="FunFam" id="1.25.40.20:FF:000209">
    <property type="entry name" value="protein fem-1 homolog A"/>
    <property type="match status" value="1"/>
</dbReference>
<dbReference type="Gene3D" id="1.25.40.20">
    <property type="entry name" value="Ankyrin repeat-containing domain"/>
    <property type="match status" value="3"/>
</dbReference>
<dbReference type="Gene3D" id="1.25.40.10">
    <property type="entry name" value="Tetratricopeptide repeat domain"/>
    <property type="match status" value="1"/>
</dbReference>
<dbReference type="InterPro" id="IPR002110">
    <property type="entry name" value="Ankyrin_rpt"/>
</dbReference>
<dbReference type="InterPro" id="IPR036770">
    <property type="entry name" value="Ankyrin_rpt-contain_sf"/>
</dbReference>
<dbReference type="InterPro" id="IPR011990">
    <property type="entry name" value="TPR-like_helical_dom_sf"/>
</dbReference>
<dbReference type="PANTHER" id="PTHR24173">
    <property type="entry name" value="ANKYRIN REPEAT CONTAINING"/>
    <property type="match status" value="1"/>
</dbReference>
<dbReference type="PANTHER" id="PTHR24173:SF74">
    <property type="entry name" value="ANKYRIN REPEAT DOMAIN-CONTAINING PROTEIN 16"/>
    <property type="match status" value="1"/>
</dbReference>
<dbReference type="Pfam" id="PF00023">
    <property type="entry name" value="Ank"/>
    <property type="match status" value="1"/>
</dbReference>
<dbReference type="Pfam" id="PF12796">
    <property type="entry name" value="Ank_2"/>
    <property type="match status" value="3"/>
</dbReference>
<dbReference type="PRINTS" id="PR01415">
    <property type="entry name" value="ANKYRIN"/>
</dbReference>
<dbReference type="SMART" id="SM00248">
    <property type="entry name" value="ANK"/>
    <property type="match status" value="9"/>
</dbReference>
<dbReference type="SUPFAM" id="SSF48403">
    <property type="entry name" value="Ankyrin repeat"/>
    <property type="match status" value="2"/>
</dbReference>
<dbReference type="SUPFAM" id="SSF48452">
    <property type="entry name" value="TPR-like"/>
    <property type="match status" value="1"/>
</dbReference>
<dbReference type="PROSITE" id="PS50297">
    <property type="entry name" value="ANK_REP_REGION"/>
    <property type="match status" value="2"/>
</dbReference>
<dbReference type="PROSITE" id="PS50088">
    <property type="entry name" value="ANK_REPEAT"/>
    <property type="match status" value="7"/>
</dbReference>
<sequence>MDLRTAVYNAARDGKLQLLQKLLSGRSREELDELTGEVAGGGTPLLIAARYGHLDVVEYLVDRCGASVEAGGSVHFDGETIEGAPPLWAASAAGHLDVVRSLLRRGASVNRTTRTNSTPLRAACFDGHLEVVRYLVGEHQADLEVANRHGHTCLMISCYKGHREIARYLLEQGAQVNRRSAKGNTALHDCAESGSLEILQLLLGCKARMERDGYGMTPLLAASVTGHTNIVEYLIQEQPGQEQVAGGEAQPGLPQEDPSTSQGCAQPQGAPCCSSSPEEPLNGESYESCCPTSREAAVEALELLGATYVDKKRDLLGALKHWRRAMELRHQGGEYLPKPEPPQLVLAYDYSREVNTTEELEALITDPDEMRMQALLIRERILGPSHPDTSYYIRYRGAVYADSGNFERCIRLWKYALDMQQSNLEPLSPMTASSFLSFAELFSYVLQDRAAKGSLGTQIGFADLMGVLTKGVREVERALQLPREPGDSAQFTKALAIILHLLYLLEKVECTPSQEHLKHQTVYRLLKCAPRGKNGFTPLHMAVDKDTTNVGRYPVGRFPSLHVVKVLLDCGADPDSRDFDNNTPLHIAAQNNCPAIMNALIEAGAHMDATNAFKKTAYELLDEKLLARGTMQPFNYVTLQCLAARALDKNKIPYKGFIPEDLEAFIELH</sequence>
<accession>Q9BSK4</accession>
<accession>B2RDI3</accession>
<accession>Q711P8</accession>
<accession>Q9NPN7</accession>
<accession>Q9NPW8</accession>
<gene>
    <name evidence="11 15" type="primary">FEM1A</name>
    <name evidence="12" type="synonym">EPRAP</name>
</gene>
<organism>
    <name type="scientific">Homo sapiens</name>
    <name type="common">Human</name>
    <dbReference type="NCBI Taxonomy" id="9606"/>
    <lineage>
        <taxon>Eukaryota</taxon>
        <taxon>Metazoa</taxon>
        <taxon>Chordata</taxon>
        <taxon>Craniata</taxon>
        <taxon>Vertebrata</taxon>
        <taxon>Euteleostomi</taxon>
        <taxon>Mammalia</taxon>
        <taxon>Eutheria</taxon>
        <taxon>Euarchontoglires</taxon>
        <taxon>Primates</taxon>
        <taxon>Haplorrhini</taxon>
        <taxon>Catarrhini</taxon>
        <taxon>Hominidae</taxon>
        <taxon>Homo</taxon>
    </lineage>
</organism>
<reference key="1">
    <citation type="journal article" date="2006" name="Circ. Res.">
        <title>A novel prostaglandin E receptor 4-associated protein participates in antiinflammatory signaling.</title>
        <authorList>
            <person name="Takayama K."/>
            <person name="Sukhova G.K."/>
            <person name="Chin M.T."/>
            <person name="Libby P."/>
        </authorList>
    </citation>
    <scope>NUCLEOTIDE SEQUENCE [MRNA]</scope>
    <scope>SUBCELLULAR LOCATION</scope>
    <scope>TISSUE SPECIFICITY</scope>
    <scope>INTERACTION WITH PTGER4</scope>
</reference>
<reference key="2">
    <citation type="journal article" date="2004" name="Nat. Genet.">
        <title>Complete sequencing and characterization of 21,243 full-length human cDNAs.</title>
        <authorList>
            <person name="Ota T."/>
            <person name="Suzuki Y."/>
            <person name="Nishikawa T."/>
            <person name="Otsuki T."/>
            <person name="Sugiyama T."/>
            <person name="Irie R."/>
            <person name="Wakamatsu A."/>
            <person name="Hayashi K."/>
            <person name="Sato H."/>
            <person name="Nagai K."/>
            <person name="Kimura K."/>
            <person name="Makita H."/>
            <person name="Sekine M."/>
            <person name="Obayashi M."/>
            <person name="Nishi T."/>
            <person name="Shibahara T."/>
            <person name="Tanaka T."/>
            <person name="Ishii S."/>
            <person name="Yamamoto J."/>
            <person name="Saito K."/>
            <person name="Kawai Y."/>
            <person name="Isono Y."/>
            <person name="Nakamura Y."/>
            <person name="Nagahari K."/>
            <person name="Murakami K."/>
            <person name="Yasuda T."/>
            <person name="Iwayanagi T."/>
            <person name="Wagatsuma M."/>
            <person name="Shiratori A."/>
            <person name="Sudo H."/>
            <person name="Hosoiri T."/>
            <person name="Kaku Y."/>
            <person name="Kodaira H."/>
            <person name="Kondo H."/>
            <person name="Sugawara M."/>
            <person name="Takahashi M."/>
            <person name="Kanda K."/>
            <person name="Yokoi T."/>
            <person name="Furuya T."/>
            <person name="Kikkawa E."/>
            <person name="Omura Y."/>
            <person name="Abe K."/>
            <person name="Kamihara K."/>
            <person name="Katsuta N."/>
            <person name="Sato K."/>
            <person name="Tanikawa M."/>
            <person name="Yamazaki M."/>
            <person name="Ninomiya K."/>
            <person name="Ishibashi T."/>
            <person name="Yamashita H."/>
            <person name="Murakawa K."/>
            <person name="Fujimori K."/>
            <person name="Tanai H."/>
            <person name="Kimata M."/>
            <person name="Watanabe M."/>
            <person name="Hiraoka S."/>
            <person name="Chiba Y."/>
            <person name="Ishida S."/>
            <person name="Ono Y."/>
            <person name="Takiguchi S."/>
            <person name="Watanabe S."/>
            <person name="Yosida M."/>
            <person name="Hotuta T."/>
            <person name="Kusano J."/>
            <person name="Kanehori K."/>
            <person name="Takahashi-Fujii A."/>
            <person name="Hara H."/>
            <person name="Tanase T.-O."/>
            <person name="Nomura Y."/>
            <person name="Togiya S."/>
            <person name="Komai F."/>
            <person name="Hara R."/>
            <person name="Takeuchi K."/>
            <person name="Arita M."/>
            <person name="Imose N."/>
            <person name="Musashino K."/>
            <person name="Yuuki H."/>
            <person name="Oshima A."/>
            <person name="Sasaki N."/>
            <person name="Aotsuka S."/>
            <person name="Yoshikawa Y."/>
            <person name="Matsunawa H."/>
            <person name="Ichihara T."/>
            <person name="Shiohata N."/>
            <person name="Sano S."/>
            <person name="Moriya S."/>
            <person name="Momiyama H."/>
            <person name="Satoh N."/>
            <person name="Takami S."/>
            <person name="Terashima Y."/>
            <person name="Suzuki O."/>
            <person name="Nakagawa S."/>
            <person name="Senoh A."/>
            <person name="Mizoguchi H."/>
            <person name="Goto Y."/>
            <person name="Shimizu F."/>
            <person name="Wakebe H."/>
            <person name="Hishigaki H."/>
            <person name="Watanabe T."/>
            <person name="Sugiyama A."/>
            <person name="Takemoto M."/>
            <person name="Kawakami B."/>
            <person name="Yamazaki M."/>
            <person name="Watanabe K."/>
            <person name="Kumagai A."/>
            <person name="Itakura S."/>
            <person name="Fukuzumi Y."/>
            <person name="Fujimori Y."/>
            <person name="Komiyama M."/>
            <person name="Tashiro H."/>
            <person name="Tanigami A."/>
            <person name="Fujiwara T."/>
            <person name="Ono T."/>
            <person name="Yamada K."/>
            <person name="Fujii Y."/>
            <person name="Ozaki K."/>
            <person name="Hirao M."/>
            <person name="Ohmori Y."/>
            <person name="Kawabata A."/>
            <person name="Hikiji T."/>
            <person name="Kobatake N."/>
            <person name="Inagaki H."/>
            <person name="Ikema Y."/>
            <person name="Okamoto S."/>
            <person name="Okitani R."/>
            <person name="Kawakami T."/>
            <person name="Noguchi S."/>
            <person name="Itoh T."/>
            <person name="Shigeta K."/>
            <person name="Senba T."/>
            <person name="Matsumura K."/>
            <person name="Nakajima Y."/>
            <person name="Mizuno T."/>
            <person name="Morinaga M."/>
            <person name="Sasaki M."/>
            <person name="Togashi T."/>
            <person name="Oyama M."/>
            <person name="Hata H."/>
            <person name="Watanabe M."/>
            <person name="Komatsu T."/>
            <person name="Mizushima-Sugano J."/>
            <person name="Satoh T."/>
            <person name="Shirai Y."/>
            <person name="Takahashi Y."/>
            <person name="Nakagawa K."/>
            <person name="Okumura K."/>
            <person name="Nagase T."/>
            <person name="Nomura N."/>
            <person name="Kikuchi H."/>
            <person name="Masuho Y."/>
            <person name="Yamashita R."/>
            <person name="Nakai K."/>
            <person name="Yada T."/>
            <person name="Nakamura Y."/>
            <person name="Ohara O."/>
            <person name="Isogai T."/>
            <person name="Sugano S."/>
        </authorList>
    </citation>
    <scope>NUCLEOTIDE SEQUENCE [LARGE SCALE MRNA]</scope>
    <source>
        <tissue>Placenta</tissue>
    </source>
</reference>
<reference key="3">
    <citation type="journal article" date="2004" name="Genome Res.">
        <title>The status, quality, and expansion of the NIH full-length cDNA project: the Mammalian Gene Collection (MGC).</title>
        <authorList>
            <consortium name="The MGC Project Team"/>
        </authorList>
    </citation>
    <scope>NUCLEOTIDE SEQUENCE [LARGE SCALE MRNA]</scope>
    <source>
        <tissue>Kidney</tissue>
    </source>
</reference>
<reference key="4">
    <citation type="submission" date="2001-05" db="EMBL/GenBank/DDBJ databases">
        <title>Full length sequencing of an human and murine muscular transcripts (Telethon Italy project B41).</title>
        <authorList>
            <person name="Ievolella C."/>
            <person name="Zara I."/>
            <person name="Millino C."/>
            <person name="Faulkner G."/>
            <person name="Lanfranchi G."/>
        </authorList>
    </citation>
    <scope>NUCLEOTIDE SEQUENCE [LARGE SCALE MRNA] OF 2-669</scope>
    <source>
        <tissue>Skeletal muscle</tissue>
    </source>
</reference>
<reference key="5">
    <citation type="submission" date="2000-07" db="EMBL/GenBank/DDBJ databases">
        <authorList>
            <consortium name="The European IMAGE consortium"/>
        </authorList>
    </citation>
    <scope>NUCLEOTIDE SEQUENCE [LARGE SCALE MRNA] OF 470-669</scope>
</reference>
<reference key="6">
    <citation type="journal article" date="2007" name="BMC Genomics">
        <title>The full-ORF clone resource of the German cDNA consortium.</title>
        <authorList>
            <person name="Bechtel S."/>
            <person name="Rosenfelder H."/>
            <person name="Duda A."/>
            <person name="Schmidt C.P."/>
            <person name="Ernst U."/>
            <person name="Wellenreuther R."/>
            <person name="Mehrle A."/>
            <person name="Schuster C."/>
            <person name="Bahr A."/>
            <person name="Bloecker H."/>
            <person name="Heubner D."/>
            <person name="Hoerlein A."/>
            <person name="Michel G."/>
            <person name="Wedler H."/>
            <person name="Koehrer K."/>
            <person name="Ottenwaelder B."/>
            <person name="Poustka A."/>
            <person name="Wiemann S."/>
            <person name="Schupp I."/>
        </authorList>
    </citation>
    <scope>NUCLEOTIDE SEQUENCE [LARGE SCALE MRNA] OF 576-669</scope>
    <source>
        <tissue>Melanoma</tissue>
    </source>
</reference>
<reference key="7">
    <citation type="journal article" date="2005" name="Tumor Biol.">
        <title>The Fem1a gene is downregulated in Rhabdomyosarcoma.</title>
        <authorList>
            <person name="Ventura-Holman T."/>
            <person name="Hahn H."/>
            <person name="Subauste J.S."/>
            <person name="Maher J.F."/>
        </authorList>
    </citation>
    <scope>INDUCTION</scope>
</reference>
<reference key="8">
    <citation type="journal article" date="2009" name="FEBS Lett.">
        <title>Fem1a is a mitochondrial protein up-regulated upon ischemia-reperfusion injury.</title>
        <authorList>
            <person name="Cambier L."/>
            <person name="Lacampagne A."/>
            <person name="Auffray C."/>
            <person name="Pomies P."/>
        </authorList>
    </citation>
    <scope>SUBCELLULAR LOCATION</scope>
</reference>
<reference key="9">
    <citation type="journal article" date="2017" name="Cell Cycle">
        <title>FEM1 proteins are ancient regulators of SLBP degradation.</title>
        <authorList>
            <person name="Dankert J.F."/>
            <person name="Pagan J.K."/>
            <person name="Starostina N.G."/>
            <person name="Kipreos E.T."/>
            <person name="Pagano M."/>
        </authorList>
    </citation>
    <scope>FUNCTION</scope>
    <scope>PATHWAY</scope>
</reference>
<reference key="10">
    <citation type="journal article" date="2018" name="Cell">
        <title>The eukaryotic proteome is shaped by E3 ubiquitin ligases targeting C-terminal degrons.</title>
        <authorList>
            <person name="Koren I."/>
            <person name="Timms R.T."/>
            <person name="Kula T."/>
            <person name="Xu Q."/>
            <person name="Li M.Z."/>
            <person name="Elledge S.J."/>
        </authorList>
    </citation>
    <scope>FUNCTION</scope>
    <scope>PATHWAY</scope>
    <scope>IDENTIFICATION IN A CRL2 E3 UBIQUITIN-PROTEIN LIGASE COMPLEX</scope>
</reference>
<reference key="11">
    <citation type="journal article" date="2021" name="Nat. Chem. Biol.">
        <title>Molecular basis for arginine C-terminal degron recognition by Cul2FEM1 E3 ligase.</title>
        <authorList>
            <person name="Chen X."/>
            <person name="Liao S."/>
            <person name="Makaros Y."/>
            <person name="Guo Q."/>
            <person name="Zhu Z."/>
            <person name="Krizelman R."/>
            <person name="Dahan K."/>
            <person name="Tu X."/>
            <person name="Yao X."/>
            <person name="Koren I."/>
            <person name="Xu C."/>
        </authorList>
    </citation>
    <scope>FUNCTION</scope>
    <scope>PATHWAY</scope>
</reference>
<reference key="12">
    <citation type="journal article" date="2021" name="Nat. Chem. Biol.">
        <title>Molecular basis for ubiquitin ligase CRL2FEM1C-mediated recognition of C-degron.</title>
        <authorList>
            <person name="Yan X."/>
            <person name="Wang X."/>
            <person name="Li Y."/>
            <person name="Zhou M."/>
            <person name="Li Y."/>
            <person name="Song L."/>
            <person name="Mi W."/>
            <person name="Min J."/>
            <person name="Dong C."/>
        </authorList>
    </citation>
    <scope>FUNCTION</scope>
    <scope>PATHWAY</scope>
</reference>
<reference key="13">
    <citation type="journal article" date="2005" name="Gynecol. Endocrinol.">
        <title>FEM1A is a candidate gene for polycystic ovary syndrome.</title>
        <authorList>
            <person name="Maher J.F."/>
            <person name="Hines R.S."/>
            <person name="Futterweit W."/>
            <person name="Crawford S."/>
            <person name="Lu D."/>
            <person name="Shen P."/>
            <person name="Oefner P."/>
            <person name="Kazi M."/>
            <person name="Wilson J.G."/>
            <person name="Subauste J.S."/>
            <person name="Cowan B.D."/>
        </authorList>
    </citation>
    <scope>VARIANT TYR-500</scope>
</reference>
<keyword id="KW-0040">ANK repeat</keyword>
<keyword id="KW-0963">Cytoplasm</keyword>
<keyword id="KW-0496">Mitochondrion</keyword>
<keyword id="KW-0597">Phosphoprotein</keyword>
<keyword id="KW-1267">Proteomics identification</keyword>
<keyword id="KW-1185">Reference proteome</keyword>
<keyword id="KW-0677">Repeat</keyword>
<keyword id="KW-0802">TPR repeat</keyword>
<keyword id="KW-0833">Ubl conjugation pathway</keyword>
<protein>
    <recommendedName>
        <fullName evidence="13">Protein fem-1 homolog A</fullName>
        <shortName evidence="11">FEM1a</shortName>
    </recommendedName>
    <alternativeName>
        <fullName evidence="13">FEM1-alpha</fullName>
    </alternativeName>
    <alternativeName>
        <fullName evidence="12">Prostaglandin E receptor 4-associated protein</fullName>
    </alternativeName>
</protein>
<evidence type="ECO:0000250" key="1">
    <source>
        <dbReference type="UniProtKB" id="Q9Z2G1"/>
    </source>
</evidence>
<evidence type="ECO:0000256" key="2">
    <source>
        <dbReference type="SAM" id="MobiDB-lite"/>
    </source>
</evidence>
<evidence type="ECO:0000269" key="3">
    <source>
    </source>
</evidence>
<evidence type="ECO:0000269" key="4">
    <source>
    </source>
</evidence>
<evidence type="ECO:0000269" key="5">
    <source>
    </source>
</evidence>
<evidence type="ECO:0000269" key="6">
    <source>
    </source>
</evidence>
<evidence type="ECO:0000269" key="7">
    <source>
    </source>
</evidence>
<evidence type="ECO:0000269" key="8">
    <source>
    </source>
</evidence>
<evidence type="ECO:0000269" key="9">
    <source>
    </source>
</evidence>
<evidence type="ECO:0000269" key="10">
    <source>
    </source>
</evidence>
<evidence type="ECO:0000303" key="11">
    <source>
    </source>
</evidence>
<evidence type="ECO:0000303" key="12">
    <source>
    </source>
</evidence>
<evidence type="ECO:0000305" key="13"/>
<evidence type="ECO:0000305" key="14">
    <source>
    </source>
</evidence>
<evidence type="ECO:0000312" key="15">
    <source>
        <dbReference type="HGNC" id="HGNC:16934"/>
    </source>
</evidence>
<feature type="chain" id="PRO_0000324525" description="Protein fem-1 homolog A">
    <location>
        <begin position="1"/>
        <end position="669"/>
    </location>
</feature>
<feature type="repeat" description="ANK 1">
    <location>
        <begin position="2"/>
        <end position="31"/>
    </location>
</feature>
<feature type="repeat" description="ANK 2">
    <location>
        <begin position="40"/>
        <end position="70"/>
    </location>
</feature>
<feature type="repeat" description="ANK 3">
    <location>
        <begin position="82"/>
        <end position="111"/>
    </location>
</feature>
<feature type="repeat" description="ANK 4">
    <location>
        <begin position="115"/>
        <end position="145"/>
    </location>
</feature>
<feature type="repeat" description="ANK 5">
    <location>
        <begin position="149"/>
        <end position="178"/>
    </location>
</feature>
<feature type="repeat" description="ANK 6">
    <location>
        <begin position="182"/>
        <end position="211"/>
    </location>
</feature>
<feature type="repeat" description="ANK 7">
    <location>
        <begin position="214"/>
        <end position="243"/>
    </location>
</feature>
<feature type="repeat" description="TPR 1">
    <location>
        <begin position="298"/>
        <end position="332"/>
    </location>
</feature>
<feature type="repeat" description="TPR 2">
    <location>
        <begin position="390"/>
        <end position="423"/>
    </location>
</feature>
<feature type="repeat" description="ANK 8">
    <location>
        <begin position="534"/>
        <end position="576"/>
    </location>
</feature>
<feature type="repeat" description="ANK 9">
    <location>
        <begin position="580"/>
        <end position="609"/>
    </location>
</feature>
<feature type="region of interest" description="Disordered" evidence="2">
    <location>
        <begin position="240"/>
        <end position="278"/>
    </location>
</feature>
<feature type="modified residue" description="Phosphoserine" evidence="1">
    <location>
        <position position="108"/>
    </location>
</feature>
<feature type="sequence variant" id="VAR_039809" description="Found in a patient with polycystic ovary syndrome; uncertain significance." evidence="4">
    <original>H</original>
    <variation>Y</variation>
    <location>
        <position position="500"/>
    </location>
</feature>
<name>FEM1A_HUMAN</name>
<proteinExistence type="evidence at protein level"/>
<comment type="function">
    <text evidence="1 7 8 9 10">Substrate-recognition component of a Cul2-RING (CRL2) E3 ubiquitin-protein ligase complex of the DesCEND (destruction via C-end degrons) pathway, which recognizes a C-degron located at the extreme C terminus of target proteins, leading to their ubiquitination and degradation (PubMed:29779948, PubMed:33398168, PubMed:33398170). The C-degron recognized by the DesCEND pathway is usually a motif of less than ten residues and can be present in full-length proteins, truncated proteins or proteolytically cleaved forms (PubMed:29779948, PubMed:33398168, PubMed:33398170). The CRL2(FEM1A) complex specifically recognizes proteins with an arginine at the C-terminus: recognizes and binds proteins ending with -Lys/Arg-Xaa-Arg and -Lys/Arg-Xaa-Xaa-Arg C-degrons, such as SIL1 or OR51B2, leading to their ubiquitination and degradation (PubMed:33398168, PubMed:33398170). Promotes ubiquitination and degradation of SLBP (PubMed:28118078). Involved in PGE2-EP4-mediated inhibition of inflammation of macrophages via interaction with NFKB1 and PTGER4 (By similarity). Promotes inflammation in brain microglia through MAP2K4/MKK4-mediated signaling (By similarity).</text>
</comment>
<comment type="pathway">
    <text evidence="7 8 9 10">Protein modification; protein ubiquitination.</text>
</comment>
<comment type="subunit">
    <text evidence="1 5 8">Component of a CRL2 E3 ubiquitin-protein ligase complex, also named ECS (Elongin BC-CUL2/5-SOCS-box protein) complex, composed of CUL2, Elongin BC (ELOB and ELOC), RBX1 and substrate-specific adapter FEM1A (PubMed:29779948). Interacts with PTGER4 (PubMed:16424369). Interacts with NFKB1; the interaction is direct (By similarity).</text>
</comment>
<comment type="interaction">
    <interactant intactId="EBI-2515349">
        <id>Q9BSK4</id>
    </interactant>
    <interactant intactId="EBI-3926709">
        <id>P09110</id>
        <label>ACAA1</label>
    </interactant>
    <organismsDiffer>false</organismsDiffer>
    <experiments>3</experiments>
</comment>
<comment type="interaction">
    <interactant intactId="EBI-2515349">
        <id>Q9BSK4</id>
    </interactant>
    <interactant intactId="EBI-5916454">
        <id>A6NEM1</id>
        <label>GOLGA6L9</label>
    </interactant>
    <organismsDiffer>false</organismsDiffer>
    <experiments>3</experiments>
</comment>
<comment type="interaction">
    <interactant intactId="EBI-2515349">
        <id>Q9BSK4</id>
    </interactant>
    <interactant intactId="EBI-6509505">
        <id>Q0VD86</id>
        <label>INCA1</label>
    </interactant>
    <organismsDiffer>false</organismsDiffer>
    <experiments>3</experiments>
</comment>
<comment type="interaction">
    <interactant intactId="EBI-2515349">
        <id>Q9BSK4</id>
    </interactant>
    <interactant intactId="EBI-14069005">
        <id>Q9BVG8-5</id>
        <label>KIFC3</label>
    </interactant>
    <organismsDiffer>false</organismsDiffer>
    <experiments>3</experiments>
</comment>
<comment type="interaction">
    <interactant intactId="EBI-2515349">
        <id>Q9BSK4</id>
    </interactant>
    <interactant intactId="EBI-12056869">
        <id>Q9UDY8-2</id>
        <label>MALT1</label>
    </interactant>
    <organismsDiffer>false</organismsDiffer>
    <experiments>3</experiments>
</comment>
<comment type="interaction">
    <interactant intactId="EBI-2515349">
        <id>Q9BSK4</id>
    </interactant>
    <interactant intactId="EBI-12247808">
        <id>Q5VTT5-2</id>
        <label>MYOM3</label>
    </interactant>
    <organismsDiffer>false</organismsDiffer>
    <experiments>3</experiments>
</comment>
<comment type="interaction">
    <interactant intactId="EBI-2515349">
        <id>Q9BSK4</id>
    </interactant>
    <interactant intactId="EBI-1246261">
        <id>O14561</id>
        <label>NDUFAB1</label>
    </interactant>
    <organismsDiffer>false</organismsDiffer>
    <experiments>3</experiments>
</comment>
<comment type="interaction">
    <interactant intactId="EBI-2515349">
        <id>Q9BSK4</id>
    </interactant>
    <interactant intactId="EBI-13327083">
        <id>Q8N543</id>
        <label>OGFOD1</label>
    </interactant>
    <organismsDiffer>false</organismsDiffer>
    <experiments>3</experiments>
</comment>
<comment type="interaction">
    <interactant intactId="EBI-2515349">
        <id>Q9BSK4</id>
    </interactant>
    <interactant intactId="EBI-12040603">
        <id>Q9NZC7-5</id>
        <label>WWOX</label>
    </interactant>
    <organismsDiffer>false</organismsDiffer>
    <experiments>3</experiments>
</comment>
<comment type="subcellular location">
    <subcellularLocation>
        <location evidence="6">Mitochondrion</location>
    </subcellularLocation>
    <subcellularLocation>
        <location evidence="14">Cytoplasm</location>
    </subcellularLocation>
</comment>
<comment type="tissue specificity">
    <text evidence="5">Present in macrophages derived from peripheral blood monocytes. Also present in atheromata (at protein level).</text>
</comment>
<comment type="induction">
    <text evidence="3">Frequently down-regulated in rhabdomyosarcoma.</text>
</comment>
<comment type="PTM">
    <text evidence="1">Phosphorylated; highly phosphorylated in myoblasts and myotubes. Phosphorylation at Ser-108 promotes PGE2-EP4-mediated inhibition of inflammation. Dephosphorylated by protein phosphatase 2A (PP2A).</text>
</comment>
<comment type="similarity">
    <text evidence="13">Belongs to the fem-1 family.</text>
</comment>